<reference key="1">
    <citation type="journal article" date="2007" name="PLoS ONE">
        <title>Analysis of the neurotoxin complex genes in Clostridium botulinum A1-A4 and B1 strains: BoNT/A3, /Ba4 and /B1 clusters are located within plasmids.</title>
        <authorList>
            <person name="Smith T.J."/>
            <person name="Hill K.K."/>
            <person name="Foley B.T."/>
            <person name="Detter J.C."/>
            <person name="Munk A.C."/>
            <person name="Bruce D.C."/>
            <person name="Doggett N.A."/>
            <person name="Smith L.A."/>
            <person name="Marks J.D."/>
            <person name="Xie G."/>
            <person name="Brettin T.S."/>
        </authorList>
    </citation>
    <scope>NUCLEOTIDE SEQUENCE [LARGE SCALE GENOMIC DNA]</scope>
    <source>
        <strain>ATCC 19397 / Type A</strain>
    </source>
</reference>
<evidence type="ECO:0000255" key="1">
    <source>
        <dbReference type="HAMAP-Rule" id="MF_00693"/>
    </source>
</evidence>
<accession>A7FY22</accession>
<name>Y3102_CLOB1</name>
<sequence length="246" mass="27093">MSGHSKWHNIQAKKGKVDAKRGKIFTKIGKEIVVAVKQGGPSADSNPRLRDVIAKAKANNMPNDTIERSIKKASGELNAVDYETITYEGYGPAGIAVLVDVLTDNKNRSAGNVRYAFTKQGGNMGSTGCVSFMFQSKGQIVIEKKDGLDEDELMMMALDAGAEDFESEDEVYAVTTSQEDFGTVREALEAEGLEFLEAEIKMVPNTYTAIDEETATKFQKMLDVLEDDDDVQNVYHNAEFPEGWEE</sequence>
<dbReference type="EMBL" id="CP000726">
    <property type="protein sequence ID" value="ABS35341.1"/>
    <property type="molecule type" value="Genomic_DNA"/>
</dbReference>
<dbReference type="RefSeq" id="WP_012048090.1">
    <property type="nucleotide sequence ID" value="NC_009697.1"/>
</dbReference>
<dbReference type="SMR" id="A7FY22"/>
<dbReference type="KEGG" id="cba:CLB_3102"/>
<dbReference type="HOGENOM" id="CLU_062974_2_2_9"/>
<dbReference type="GO" id="GO:0005829">
    <property type="term" value="C:cytosol"/>
    <property type="evidence" value="ECO:0007669"/>
    <property type="project" value="TreeGrafter"/>
</dbReference>
<dbReference type="GO" id="GO:0003677">
    <property type="term" value="F:DNA binding"/>
    <property type="evidence" value="ECO:0007669"/>
    <property type="project" value="UniProtKB-UniRule"/>
</dbReference>
<dbReference type="GO" id="GO:0006355">
    <property type="term" value="P:regulation of DNA-templated transcription"/>
    <property type="evidence" value="ECO:0007669"/>
    <property type="project" value="UniProtKB-UniRule"/>
</dbReference>
<dbReference type="FunFam" id="1.10.10.200:FF:000002">
    <property type="entry name" value="Probable transcriptional regulatory protein CLM62_37755"/>
    <property type="match status" value="1"/>
</dbReference>
<dbReference type="FunFam" id="3.30.70.980:FF:000002">
    <property type="entry name" value="Probable transcriptional regulatory protein YebC"/>
    <property type="match status" value="1"/>
</dbReference>
<dbReference type="Gene3D" id="1.10.10.200">
    <property type="match status" value="1"/>
</dbReference>
<dbReference type="Gene3D" id="3.30.70.980">
    <property type="match status" value="2"/>
</dbReference>
<dbReference type="HAMAP" id="MF_00693">
    <property type="entry name" value="Transcrip_reg_TACO1"/>
    <property type="match status" value="1"/>
</dbReference>
<dbReference type="InterPro" id="IPR017856">
    <property type="entry name" value="Integrase-like_N"/>
</dbReference>
<dbReference type="InterPro" id="IPR048300">
    <property type="entry name" value="TACO1_YebC-like_2nd/3rd_dom"/>
</dbReference>
<dbReference type="InterPro" id="IPR049083">
    <property type="entry name" value="TACO1_YebC_N"/>
</dbReference>
<dbReference type="InterPro" id="IPR002876">
    <property type="entry name" value="Transcrip_reg_TACO1-like"/>
</dbReference>
<dbReference type="InterPro" id="IPR026564">
    <property type="entry name" value="Transcrip_reg_TACO1-like_dom3"/>
</dbReference>
<dbReference type="InterPro" id="IPR029072">
    <property type="entry name" value="YebC-like"/>
</dbReference>
<dbReference type="NCBIfam" id="NF001030">
    <property type="entry name" value="PRK00110.1"/>
    <property type="match status" value="1"/>
</dbReference>
<dbReference type="NCBIfam" id="NF009044">
    <property type="entry name" value="PRK12378.1"/>
    <property type="match status" value="1"/>
</dbReference>
<dbReference type="NCBIfam" id="TIGR01033">
    <property type="entry name" value="YebC/PmpR family DNA-binding transcriptional regulator"/>
    <property type="match status" value="1"/>
</dbReference>
<dbReference type="PANTHER" id="PTHR12532:SF6">
    <property type="entry name" value="TRANSCRIPTIONAL REGULATORY PROTEIN YEBC-RELATED"/>
    <property type="match status" value="1"/>
</dbReference>
<dbReference type="PANTHER" id="PTHR12532">
    <property type="entry name" value="TRANSLATIONAL ACTIVATOR OF CYTOCHROME C OXIDASE 1"/>
    <property type="match status" value="1"/>
</dbReference>
<dbReference type="Pfam" id="PF20772">
    <property type="entry name" value="TACO1_YebC_N"/>
    <property type="match status" value="1"/>
</dbReference>
<dbReference type="Pfam" id="PF01709">
    <property type="entry name" value="Transcrip_reg"/>
    <property type="match status" value="1"/>
</dbReference>
<dbReference type="SUPFAM" id="SSF75625">
    <property type="entry name" value="YebC-like"/>
    <property type="match status" value="1"/>
</dbReference>
<feature type="chain" id="PRO_1000045298" description="Probable transcriptional regulatory protein CLB_3102">
    <location>
        <begin position="1"/>
        <end position="246"/>
    </location>
</feature>
<keyword id="KW-0963">Cytoplasm</keyword>
<keyword id="KW-0238">DNA-binding</keyword>
<keyword id="KW-0804">Transcription</keyword>
<keyword id="KW-0805">Transcription regulation</keyword>
<comment type="subcellular location">
    <subcellularLocation>
        <location evidence="1">Cytoplasm</location>
    </subcellularLocation>
</comment>
<comment type="similarity">
    <text evidence="1">Belongs to the TACO1 family.</text>
</comment>
<organism>
    <name type="scientific">Clostridium botulinum (strain ATCC 19397 / Type A)</name>
    <dbReference type="NCBI Taxonomy" id="441770"/>
    <lineage>
        <taxon>Bacteria</taxon>
        <taxon>Bacillati</taxon>
        <taxon>Bacillota</taxon>
        <taxon>Clostridia</taxon>
        <taxon>Eubacteriales</taxon>
        <taxon>Clostridiaceae</taxon>
        <taxon>Clostridium</taxon>
    </lineage>
</organism>
<protein>
    <recommendedName>
        <fullName evidence="1">Probable transcriptional regulatory protein CLB_3102</fullName>
    </recommendedName>
</protein>
<gene>
    <name type="ordered locus">CLB_3102</name>
</gene>
<proteinExistence type="inferred from homology"/>